<keyword id="KW-1003">Cell membrane</keyword>
<keyword id="KW-0966">Cell projection</keyword>
<keyword id="KW-0968">Cytoplasmic vesicle</keyword>
<keyword id="KW-0967">Endosome</keyword>
<keyword id="KW-0325">Glycoprotein</keyword>
<keyword id="KW-0406">Ion transport</keyword>
<keyword id="KW-0472">Membrane</keyword>
<keyword id="KW-0530">Neurotransmitter biosynthesis</keyword>
<keyword id="KW-0597">Phosphoprotein</keyword>
<keyword id="KW-1185">Reference proteome</keyword>
<keyword id="KW-0915">Sodium</keyword>
<keyword id="KW-0739">Sodium transport</keyword>
<keyword id="KW-0769">Symport</keyword>
<keyword id="KW-0770">Synapse</keyword>
<keyword id="KW-0812">Transmembrane</keyword>
<keyword id="KW-1133">Transmembrane helix</keyword>
<keyword id="KW-0813">Transport</keyword>
<organism>
    <name type="scientific">Mus musculus</name>
    <name type="common">Mouse</name>
    <dbReference type="NCBI Taxonomy" id="10090"/>
    <lineage>
        <taxon>Eukaryota</taxon>
        <taxon>Metazoa</taxon>
        <taxon>Chordata</taxon>
        <taxon>Craniata</taxon>
        <taxon>Vertebrata</taxon>
        <taxon>Euteleostomi</taxon>
        <taxon>Mammalia</taxon>
        <taxon>Eutheria</taxon>
        <taxon>Euarchontoglires</taxon>
        <taxon>Glires</taxon>
        <taxon>Rodentia</taxon>
        <taxon>Myomorpha</taxon>
        <taxon>Muroidea</taxon>
        <taxon>Muridae</taxon>
        <taxon>Murinae</taxon>
        <taxon>Mus</taxon>
        <taxon>Mus</taxon>
    </lineage>
</organism>
<feature type="chain" id="PRO_0000105392" description="High affinity choline transporter 1">
    <location>
        <begin position="1"/>
        <end position="580"/>
    </location>
</feature>
<feature type="topological domain" description="Extracellular" evidence="3">
    <location>
        <begin position="1"/>
        <end position="6"/>
    </location>
</feature>
<feature type="transmembrane region" description="Helical" evidence="3">
    <location>
        <begin position="7"/>
        <end position="27"/>
    </location>
</feature>
<feature type="topological domain" description="Cytoplasmic" evidence="3">
    <location>
        <begin position="28"/>
        <end position="48"/>
    </location>
</feature>
<feature type="transmembrane region" description="Helical" evidence="3">
    <location>
        <begin position="49"/>
        <end position="69"/>
    </location>
</feature>
<feature type="topological domain" description="Extracellular" evidence="3">
    <location>
        <begin position="70"/>
        <end position="81"/>
    </location>
</feature>
<feature type="transmembrane region" description="Helical" evidence="3">
    <location>
        <begin position="82"/>
        <end position="102"/>
    </location>
</feature>
<feature type="topological domain" description="Cytoplasmic" evidence="3">
    <location>
        <begin position="103"/>
        <end position="125"/>
    </location>
</feature>
<feature type="transmembrane region" description="Helical" evidence="3">
    <location>
        <begin position="126"/>
        <end position="146"/>
    </location>
</feature>
<feature type="topological domain" description="Extracellular" evidence="3">
    <location>
        <begin position="147"/>
        <end position="164"/>
    </location>
</feature>
<feature type="transmembrane region" description="Helical" evidence="3">
    <location>
        <begin position="165"/>
        <end position="185"/>
    </location>
</feature>
<feature type="topological domain" description="Cytoplasmic" evidence="3">
    <location>
        <begin position="186"/>
        <end position="191"/>
    </location>
</feature>
<feature type="transmembrane region" description="Helical" evidence="3">
    <location>
        <begin position="192"/>
        <end position="212"/>
    </location>
</feature>
<feature type="topological domain" description="Extracellular" evidence="3">
    <location>
        <begin position="213"/>
        <end position="237"/>
    </location>
</feature>
<feature type="transmembrane region" description="Helical" evidence="3">
    <location>
        <begin position="238"/>
        <end position="258"/>
    </location>
</feature>
<feature type="topological domain" description="Cytoplasmic" evidence="3">
    <location>
        <begin position="259"/>
        <end position="274"/>
    </location>
</feature>
<feature type="transmembrane region" description="Helical" evidence="3">
    <location>
        <begin position="275"/>
        <end position="295"/>
    </location>
</feature>
<feature type="topological domain" description="Extracellular" evidence="3">
    <location>
        <begin position="296"/>
        <end position="317"/>
    </location>
</feature>
<feature type="transmembrane region" description="Helical" evidence="3">
    <location>
        <begin position="318"/>
        <end position="338"/>
    </location>
</feature>
<feature type="topological domain" description="Cytoplasmic" evidence="3">
    <location>
        <begin position="339"/>
        <end position="376"/>
    </location>
</feature>
<feature type="transmembrane region" description="Helical" evidence="3">
    <location>
        <begin position="377"/>
        <end position="397"/>
    </location>
</feature>
<feature type="topological domain" description="Extracellular" evidence="3">
    <location>
        <begin position="398"/>
        <end position="406"/>
    </location>
</feature>
<feature type="transmembrane region" description="Helical" evidence="3">
    <location>
        <begin position="407"/>
        <end position="427"/>
    </location>
</feature>
<feature type="topological domain" description="Cytoplasmic" evidence="3">
    <location>
        <begin position="428"/>
        <end position="435"/>
    </location>
</feature>
<feature type="transmembrane region" description="Helical" evidence="3">
    <location>
        <begin position="436"/>
        <end position="456"/>
    </location>
</feature>
<feature type="topological domain" description="Extracellular" evidence="3">
    <location>
        <begin position="457"/>
        <end position="481"/>
    </location>
</feature>
<feature type="transmembrane region" description="Helical" evidence="3">
    <location>
        <begin position="482"/>
        <end position="502"/>
    </location>
</feature>
<feature type="topological domain" description="Cytoplasmic" evidence="3">
    <location>
        <begin position="503"/>
        <end position="580"/>
    </location>
</feature>
<feature type="region of interest" description="Mediates interaction with SEC14L1" evidence="2">
    <location>
        <begin position="502"/>
        <end position="580"/>
    </location>
</feature>
<feature type="short sequence motif" description="Dileucine-like motif" evidence="1">
    <location>
        <begin position="527"/>
        <end position="532"/>
    </location>
</feature>
<feature type="glycosylation site" description="N-linked (GlcNAc...) asparagine" evidence="3">
    <location>
        <position position="301"/>
    </location>
</feature>
<feature type="sequence conflict" description="In Ref. 1; AAG36945." evidence="8" ref="1">
    <original>S</original>
    <variation>P</variation>
    <location>
        <position position="2"/>
    </location>
</feature>
<feature type="sequence conflict" description="In Ref. 2; CAC03719." evidence="8" ref="2">
    <original>R</original>
    <variation>H</variation>
    <location>
        <position position="38"/>
    </location>
</feature>
<feature type="sequence conflict" description="In Ref. 2; CAC03719." evidence="8" ref="2">
    <original>E</original>
    <variation>V</variation>
    <location>
        <position position="73"/>
    </location>
</feature>
<feature type="sequence conflict" description="In Ref. 1; AAG36945." evidence="8" ref="1">
    <original>Q</original>
    <variation>H</variation>
    <location>
        <position position="86"/>
    </location>
</feature>
<feature type="sequence conflict" description="In Ref. 1; AAG36945." evidence="8" ref="1">
    <original>Q</original>
    <variation>K</variation>
    <location>
        <position position="119"/>
    </location>
</feature>
<feature type="sequence conflict" description="In Ref. 2; CAC03719." evidence="8" ref="2">
    <original>F</original>
    <variation>Y</variation>
    <location>
        <position position="275"/>
    </location>
</feature>
<dbReference type="EMBL" id="AF276872">
    <property type="protein sequence ID" value="AAG36945.2"/>
    <property type="molecule type" value="mRNA"/>
</dbReference>
<dbReference type="EMBL" id="AJ401467">
    <property type="protein sequence ID" value="CAC03719.1"/>
    <property type="molecule type" value="mRNA"/>
</dbReference>
<dbReference type="EMBL" id="AK034415">
    <property type="protein sequence ID" value="BAC28702.1"/>
    <property type="molecule type" value="mRNA"/>
</dbReference>
<dbReference type="EMBL" id="AK053063">
    <property type="protein sequence ID" value="BAC35253.1"/>
    <property type="molecule type" value="mRNA"/>
</dbReference>
<dbReference type="EMBL" id="BC065089">
    <property type="protein sequence ID" value="AAH65089.1"/>
    <property type="molecule type" value="mRNA"/>
</dbReference>
<dbReference type="CCDS" id="CCDS28885.1"/>
<dbReference type="RefSeq" id="NP_071308.2">
    <property type="nucleotide sequence ID" value="NM_022025.4"/>
</dbReference>
<dbReference type="RefSeq" id="XP_006524837.1">
    <property type="nucleotide sequence ID" value="XM_006524774.4"/>
</dbReference>
<dbReference type="RefSeq" id="XP_006524838.1">
    <property type="nucleotide sequence ID" value="XM_006524775.4"/>
</dbReference>
<dbReference type="RefSeq" id="XP_036016630.1">
    <property type="nucleotide sequence ID" value="XM_036160737.1"/>
</dbReference>
<dbReference type="SMR" id="Q8BGY9"/>
<dbReference type="DIP" id="DIP-46467N"/>
<dbReference type="FunCoup" id="Q8BGY9">
    <property type="interactions" value="110"/>
</dbReference>
<dbReference type="IntAct" id="Q8BGY9">
    <property type="interactions" value="3"/>
</dbReference>
<dbReference type="STRING" id="10090.ENSMUSP00000093379"/>
<dbReference type="BindingDB" id="Q8BGY9"/>
<dbReference type="ChEMBL" id="CHEMBL3013"/>
<dbReference type="DrugCentral" id="Q8BGY9"/>
<dbReference type="GlyCosmos" id="Q8BGY9">
    <property type="glycosylation" value="1 site, No reported glycans"/>
</dbReference>
<dbReference type="GlyGen" id="Q8BGY9">
    <property type="glycosylation" value="1 site"/>
</dbReference>
<dbReference type="iPTMnet" id="Q8BGY9"/>
<dbReference type="PhosphoSitePlus" id="Q8BGY9"/>
<dbReference type="PaxDb" id="10090-ENSMUSP00000093379"/>
<dbReference type="ProteomicsDB" id="255468"/>
<dbReference type="Antibodypedia" id="33052">
    <property type="antibodies" value="89 antibodies from 23 providers"/>
</dbReference>
<dbReference type="DNASU" id="63993"/>
<dbReference type="Ensembl" id="ENSMUST00000095712.5">
    <property type="protein sequence ID" value="ENSMUSP00000093379.4"/>
    <property type="gene ID" value="ENSMUSG00000023945.8"/>
</dbReference>
<dbReference type="GeneID" id="63993"/>
<dbReference type="KEGG" id="mmu:63993"/>
<dbReference type="UCSC" id="uc008czy.1">
    <property type="organism name" value="mouse"/>
</dbReference>
<dbReference type="AGR" id="MGI:1927126"/>
<dbReference type="CTD" id="60482"/>
<dbReference type="MGI" id="MGI:1927126">
    <property type="gene designation" value="Slc5a7"/>
</dbReference>
<dbReference type="VEuPathDB" id="HostDB:ENSMUSG00000023945"/>
<dbReference type="eggNOG" id="KOG3761">
    <property type="taxonomic scope" value="Eukaryota"/>
</dbReference>
<dbReference type="GeneTree" id="ENSGT00690000101915"/>
<dbReference type="HOGENOM" id="CLU_018808_10_0_1"/>
<dbReference type="InParanoid" id="Q8BGY9"/>
<dbReference type="OMA" id="WKTKNTG"/>
<dbReference type="OrthoDB" id="546820at2759"/>
<dbReference type="PhylomeDB" id="Q8BGY9"/>
<dbReference type="TreeFam" id="TF314588"/>
<dbReference type="Reactome" id="R-MMU-264642">
    <property type="pathway name" value="Acetylcholine Neurotransmitter Release Cycle"/>
</dbReference>
<dbReference type="Reactome" id="R-MMU-425366">
    <property type="pathway name" value="Transport of bile salts and organic acids, metal ions and amine compounds"/>
</dbReference>
<dbReference type="BioGRID-ORCS" id="63993">
    <property type="hits" value="1 hit in 76 CRISPR screens"/>
</dbReference>
<dbReference type="ChiTaRS" id="Slc5a7">
    <property type="organism name" value="mouse"/>
</dbReference>
<dbReference type="PRO" id="PR:Q8BGY9"/>
<dbReference type="Proteomes" id="UP000000589">
    <property type="component" value="Chromosome 17"/>
</dbReference>
<dbReference type="RNAct" id="Q8BGY9">
    <property type="molecule type" value="protein"/>
</dbReference>
<dbReference type="Bgee" id="ENSMUSG00000023945">
    <property type="expression patterns" value="Expressed in lumbar subsegment of spinal cord and 41 other cell types or tissues"/>
</dbReference>
<dbReference type="ExpressionAtlas" id="Q8BGY9">
    <property type="expression patterns" value="baseline and differential"/>
</dbReference>
<dbReference type="GO" id="GO:0030424">
    <property type="term" value="C:axon"/>
    <property type="evidence" value="ECO:0007669"/>
    <property type="project" value="UniProtKB-SubCell"/>
</dbReference>
<dbReference type="GO" id="GO:0031901">
    <property type="term" value="C:early endosome membrane"/>
    <property type="evidence" value="ECO:0000250"/>
    <property type="project" value="UniProtKB"/>
</dbReference>
<dbReference type="GO" id="GO:0016020">
    <property type="term" value="C:membrane"/>
    <property type="evidence" value="ECO:0000303"/>
    <property type="project" value="UniProtKB"/>
</dbReference>
<dbReference type="GO" id="GO:0031594">
    <property type="term" value="C:neuromuscular junction"/>
    <property type="evidence" value="ECO:0007669"/>
    <property type="project" value="Ensembl"/>
</dbReference>
<dbReference type="GO" id="GO:0043025">
    <property type="term" value="C:neuronal cell body"/>
    <property type="evidence" value="ECO:0000314"/>
    <property type="project" value="MGI"/>
</dbReference>
<dbReference type="GO" id="GO:0005886">
    <property type="term" value="C:plasma membrane"/>
    <property type="evidence" value="ECO:0000314"/>
    <property type="project" value="MGI"/>
</dbReference>
<dbReference type="GO" id="GO:0042734">
    <property type="term" value="C:presynaptic membrane"/>
    <property type="evidence" value="ECO:0000315"/>
    <property type="project" value="UniProtKB"/>
</dbReference>
<dbReference type="GO" id="GO:0030672">
    <property type="term" value="C:synaptic vesicle membrane"/>
    <property type="evidence" value="ECO:0000250"/>
    <property type="project" value="UniProtKB"/>
</dbReference>
<dbReference type="GO" id="GO:0033265">
    <property type="term" value="F:choline binding"/>
    <property type="evidence" value="ECO:0000314"/>
    <property type="project" value="MGI"/>
</dbReference>
<dbReference type="GO" id="GO:0015220">
    <property type="term" value="F:choline transmembrane transporter activity"/>
    <property type="evidence" value="ECO:0000314"/>
    <property type="project" value="UniProtKB"/>
</dbReference>
<dbReference type="GO" id="GO:0005307">
    <property type="term" value="F:choline:sodium symporter activity"/>
    <property type="evidence" value="ECO:0000250"/>
    <property type="project" value="UniProtKB"/>
</dbReference>
<dbReference type="GO" id="GO:0008292">
    <property type="term" value="P:acetylcholine biosynthetic process"/>
    <property type="evidence" value="ECO:0000314"/>
    <property type="project" value="UniProtKB"/>
</dbReference>
<dbReference type="GO" id="GO:0015871">
    <property type="term" value="P:choline transport"/>
    <property type="evidence" value="ECO:0000314"/>
    <property type="project" value="UniProtKB"/>
</dbReference>
<dbReference type="GO" id="GO:0001701">
    <property type="term" value="P:in utero embryonic development"/>
    <property type="evidence" value="ECO:0000315"/>
    <property type="project" value="MGI"/>
</dbReference>
<dbReference type="GO" id="GO:0007274">
    <property type="term" value="P:neuromuscular synaptic transmission"/>
    <property type="evidence" value="ECO:0000315"/>
    <property type="project" value="MGI"/>
</dbReference>
<dbReference type="GO" id="GO:0007271">
    <property type="term" value="P:synaptic transmission, cholinergic"/>
    <property type="evidence" value="ECO:0000315"/>
    <property type="project" value="MGI"/>
</dbReference>
<dbReference type="CDD" id="cd11474">
    <property type="entry name" value="SLC5sbd_CHT"/>
    <property type="match status" value="1"/>
</dbReference>
<dbReference type="FunFam" id="1.20.1730.10:FF:000008">
    <property type="entry name" value="High affinity choline transporter 1"/>
    <property type="match status" value="1"/>
</dbReference>
<dbReference type="Gene3D" id="1.20.1730.10">
    <property type="entry name" value="Sodium/glucose cotransporter"/>
    <property type="match status" value="1"/>
</dbReference>
<dbReference type="InterPro" id="IPR052244">
    <property type="entry name" value="Choline_transporter"/>
</dbReference>
<dbReference type="InterPro" id="IPR038377">
    <property type="entry name" value="Na/Glc_symporter_sf"/>
</dbReference>
<dbReference type="InterPro" id="IPR001734">
    <property type="entry name" value="Na/solute_symporter"/>
</dbReference>
<dbReference type="PANTHER" id="PTHR45897:SF2">
    <property type="entry name" value="HIGH AFFINITY CHOLINE TRANSPORTER 1"/>
    <property type="match status" value="1"/>
</dbReference>
<dbReference type="PANTHER" id="PTHR45897">
    <property type="entry name" value="HIGH-AFFINITY CHOLINE TRANSPORTER 1"/>
    <property type="match status" value="1"/>
</dbReference>
<dbReference type="Pfam" id="PF00474">
    <property type="entry name" value="SSF"/>
    <property type="match status" value="1"/>
</dbReference>
<dbReference type="PROSITE" id="PS50283">
    <property type="entry name" value="NA_SOLUT_SYMP_3"/>
    <property type="match status" value="1"/>
</dbReference>
<comment type="function">
    <text evidence="1 4 6">High-affinity Na(+)-coupled choline transmembrane symporter (PubMed:11709061, PubMed:15173594). Functions as an electrogenic, voltage-dependent transporter with variable charge/choline stoichiometry (By similarity). Choline uptake and choline-induced current is also Cl(-)-dependent where Cl(-) is likely a regulatory ion rather than cotransported ion (By similarity). Plays a critical role in acetylcholine (ACh) synthesis by taking up the substrate choline from the synaptic cleft into the presynaptic nerve terminals after neurotransmitter release (By similarity). SLC5A7/CHT1-mediated choline high-affinity transport in cholinergic neurons is the rate-limiting step for production of ACh, thereby facilitating communication by subsequent action potentials (PubMed:11709061, PubMed:15173594). Localized predominantly in presynaptic terminal intracellular organelles, and translocated to the plasma membrane in active form in response to neuronal activity (By similarity).</text>
</comment>
<comment type="catalytic activity">
    <reaction evidence="4 6">
        <text>choline(out) + n Na(+)(out) = choline(in) + n Na(+)(in)</text>
        <dbReference type="Rhea" id="RHEA:76443"/>
        <dbReference type="ChEBI" id="CHEBI:15354"/>
        <dbReference type="ChEBI" id="CHEBI:29101"/>
    </reaction>
</comment>
<comment type="activity regulation">
    <text evidence="1 4 6">Choline uptake activity is regulated by SLC5A7/CHT1 internalization (inactive form) from the cell surface and recycling of internalized SLC5A7/CHT1 into the cell surface (active form) (By similarity). Activated by extracellular chloride ion (By similarity). Specifically inhibited by nanomolar concentrations of hemicholinium 3 (PubMed:11709061, PubMed:15173594).</text>
</comment>
<comment type="subunit">
    <text evidence="1">Homooligomerizes at cell surface. Interacts with SEC14L1; may regulate SLC5A7.</text>
</comment>
<comment type="interaction">
    <interactant intactId="EBI-2010752">
        <id>Q8BGY9</id>
    </interactant>
    <interactant intactId="EBI-77613">
        <id>P05067</id>
        <label>APP</label>
    </interactant>
    <organismsDiffer>true</organismsDiffer>
    <experiments>2</experiments>
</comment>
<comment type="subcellular location">
    <subcellularLocation>
        <location evidence="6">Presynaptic cell membrane</location>
        <topology evidence="8">Multi-pass membrane protein</topology>
    </subcellularLocation>
    <subcellularLocation>
        <location evidence="6">Cell projection</location>
        <location evidence="6">Axon</location>
    </subcellularLocation>
    <subcellularLocation>
        <location evidence="1">Early endosome membrane</location>
        <topology evidence="8">Multi-pass membrane protein</topology>
    </subcellularLocation>
    <subcellularLocation>
        <location evidence="1">Cytoplasmic vesicle</location>
        <location evidence="1">Secretory vesicle</location>
        <location evidence="1">Synaptic vesicle membrane</location>
        <topology evidence="8">Multi-pass membrane protein</topology>
    </subcellularLocation>
    <text evidence="6">Localized to motor neuron axons.</text>
</comment>
<comment type="tissue specificity">
    <text evidence="4">Found in spinal cord, brain-stem, mid-brain and striatum (PubMed:11709061). Specific for cholinergic neurons (PubMed:11709061).</text>
</comment>
<comment type="domain">
    <text evidence="1">The C-terminal dileucine-like motif (DKTILV) controls SLC5A7/CHT1 internalization in clathrin-coated vesicles to early endosomes as well as choline transporter activity.</text>
</comment>
<comment type="PTM">
    <text evidence="5">Phosphorylated by PKC and dephosphorylated by PP1/PP2A.</text>
</comment>
<comment type="disruption phenotype">
    <text evidence="6">Although morphologically normal at birth, knockout mice become immobile, breathe irregularly, appear cyanotic, and die within an hour. Mice had developmental changes in neuromuscular junction morphology reminiscent of changes in mutant mice lacking ACh synthesis.</text>
</comment>
<comment type="similarity">
    <text evidence="8">Belongs to the sodium:solute symporter (SSF) (TC 2.A.21) family.</text>
</comment>
<proteinExistence type="evidence at protein level"/>
<sequence>MSFHVEGLVAIILFYLLIFLVGIWAAWKTKNSGNPEERSEAIIVGGRDIGLLVGGFTMTATWVGGGYINGTAEAVYGPGCGLAWAQAPIGYSLSLILGGLFFAKPMRSKGYVTMLDPFQQIYGKRMGGLLFIPALMGEMFWAAAIFSALGATISVIIDVDVNISVIVSALIAILYTLVGGLYSVAYTDVVQLFCIFIGLWISVPFALSHPAVTDIGFTAVHAKYQSPWLGTIESVEVYTWLDNFLLLMLGGIPWQAYFQRVLSSSSATYAQVLSFLAAFGCLVMALPAICIGAIGASTDWNQTAYGYPDPKTKEEADMILPIVLQYLCPVYISFFGLGAVSAAVMSSADSSILSASSMFARNIYQLSFRQNASDKEIVWVMRITVLVFGASATAMALLTKTVYGLWYLSSDLVYIIIFPQLLCVLFIKGTNTYGAVAGYIFGLFLRITGGEPYLYLQPLIFYPGYYSDKNGIYNQRFPFKTLSMVTSFFTNICVSYLAKYLFESGTLPPKLDVFDAVVARHSEENMDKTILVRNENIKLNELAPVKPRQSLTLSSTFTNKEALLDVDSSPEGSGTEDNLQ</sequence>
<name>SC5A7_MOUSE</name>
<protein>
    <recommendedName>
        <fullName evidence="1">High affinity choline transporter 1</fullName>
    </recommendedName>
    <alternativeName>
        <fullName evidence="7">Hemicholinium-3-sensitive choline transporter</fullName>
        <shortName evidence="7">CHT</shortName>
    </alternativeName>
    <alternativeName>
        <fullName evidence="1">Solute carrier family 5 member 7</fullName>
    </alternativeName>
</protein>
<accession>Q8BGY9</accession>
<accession>Q99PK3</accession>
<accession>Q9ESW5</accession>
<reference key="1">
    <citation type="journal article" date="2001" name="Biochem. Soc. Trans.">
        <title>Molecular cloning and characterization of a murine hemicholinium-3-sensitive choline transporter.</title>
        <authorList>
            <person name="Apparsundaram S."/>
            <person name="Ferguson S.M."/>
            <person name="Blakely R.D."/>
        </authorList>
    </citation>
    <scope>NUCLEOTIDE SEQUENCE [MRNA]</scope>
    <scope>FUNCTION</scope>
    <scope>TRANSPORTER ACTIVITY</scope>
    <scope>ACTIVITY REGULATION</scope>
    <scope>TISSUE SPECIFICITY</scope>
    <source>
        <tissue>Spinal cord</tissue>
    </source>
</reference>
<reference key="2">
    <citation type="submission" date="2000-08" db="EMBL/GenBank/DDBJ databases">
        <title>Molecular cloning of the human and murine high affinity choline transporters and characterization of the human gene structure.</title>
        <authorList>
            <person name="Wieland A."/>
            <person name="Bonisch H."/>
            <person name="Bruess M."/>
        </authorList>
    </citation>
    <scope>NUCLEOTIDE SEQUENCE [MRNA]</scope>
    <source>
        <strain>BALB/cJ</strain>
        <tissue>Brain stem</tissue>
    </source>
</reference>
<reference key="3">
    <citation type="journal article" date="2005" name="Science">
        <title>The transcriptional landscape of the mammalian genome.</title>
        <authorList>
            <person name="Carninci P."/>
            <person name="Kasukawa T."/>
            <person name="Katayama S."/>
            <person name="Gough J."/>
            <person name="Frith M.C."/>
            <person name="Maeda N."/>
            <person name="Oyama R."/>
            <person name="Ravasi T."/>
            <person name="Lenhard B."/>
            <person name="Wells C."/>
            <person name="Kodzius R."/>
            <person name="Shimokawa K."/>
            <person name="Bajic V.B."/>
            <person name="Brenner S.E."/>
            <person name="Batalov S."/>
            <person name="Forrest A.R."/>
            <person name="Zavolan M."/>
            <person name="Davis M.J."/>
            <person name="Wilming L.G."/>
            <person name="Aidinis V."/>
            <person name="Allen J.E."/>
            <person name="Ambesi-Impiombato A."/>
            <person name="Apweiler R."/>
            <person name="Aturaliya R.N."/>
            <person name="Bailey T.L."/>
            <person name="Bansal M."/>
            <person name="Baxter L."/>
            <person name="Beisel K.W."/>
            <person name="Bersano T."/>
            <person name="Bono H."/>
            <person name="Chalk A.M."/>
            <person name="Chiu K.P."/>
            <person name="Choudhary V."/>
            <person name="Christoffels A."/>
            <person name="Clutterbuck D.R."/>
            <person name="Crowe M.L."/>
            <person name="Dalla E."/>
            <person name="Dalrymple B.P."/>
            <person name="de Bono B."/>
            <person name="Della Gatta G."/>
            <person name="di Bernardo D."/>
            <person name="Down T."/>
            <person name="Engstrom P."/>
            <person name="Fagiolini M."/>
            <person name="Faulkner G."/>
            <person name="Fletcher C.F."/>
            <person name="Fukushima T."/>
            <person name="Furuno M."/>
            <person name="Futaki S."/>
            <person name="Gariboldi M."/>
            <person name="Georgii-Hemming P."/>
            <person name="Gingeras T.R."/>
            <person name="Gojobori T."/>
            <person name="Green R.E."/>
            <person name="Gustincich S."/>
            <person name="Harbers M."/>
            <person name="Hayashi Y."/>
            <person name="Hensch T.K."/>
            <person name="Hirokawa N."/>
            <person name="Hill D."/>
            <person name="Huminiecki L."/>
            <person name="Iacono M."/>
            <person name="Ikeo K."/>
            <person name="Iwama A."/>
            <person name="Ishikawa T."/>
            <person name="Jakt M."/>
            <person name="Kanapin A."/>
            <person name="Katoh M."/>
            <person name="Kawasawa Y."/>
            <person name="Kelso J."/>
            <person name="Kitamura H."/>
            <person name="Kitano H."/>
            <person name="Kollias G."/>
            <person name="Krishnan S.P."/>
            <person name="Kruger A."/>
            <person name="Kummerfeld S.K."/>
            <person name="Kurochkin I.V."/>
            <person name="Lareau L.F."/>
            <person name="Lazarevic D."/>
            <person name="Lipovich L."/>
            <person name="Liu J."/>
            <person name="Liuni S."/>
            <person name="McWilliam S."/>
            <person name="Madan Babu M."/>
            <person name="Madera M."/>
            <person name="Marchionni L."/>
            <person name="Matsuda H."/>
            <person name="Matsuzawa S."/>
            <person name="Miki H."/>
            <person name="Mignone F."/>
            <person name="Miyake S."/>
            <person name="Morris K."/>
            <person name="Mottagui-Tabar S."/>
            <person name="Mulder N."/>
            <person name="Nakano N."/>
            <person name="Nakauchi H."/>
            <person name="Ng P."/>
            <person name="Nilsson R."/>
            <person name="Nishiguchi S."/>
            <person name="Nishikawa S."/>
            <person name="Nori F."/>
            <person name="Ohara O."/>
            <person name="Okazaki Y."/>
            <person name="Orlando V."/>
            <person name="Pang K.C."/>
            <person name="Pavan W.J."/>
            <person name="Pavesi G."/>
            <person name="Pesole G."/>
            <person name="Petrovsky N."/>
            <person name="Piazza S."/>
            <person name="Reed J."/>
            <person name="Reid J.F."/>
            <person name="Ring B.Z."/>
            <person name="Ringwald M."/>
            <person name="Rost B."/>
            <person name="Ruan Y."/>
            <person name="Salzberg S.L."/>
            <person name="Sandelin A."/>
            <person name="Schneider C."/>
            <person name="Schoenbach C."/>
            <person name="Sekiguchi K."/>
            <person name="Semple C.A."/>
            <person name="Seno S."/>
            <person name="Sessa L."/>
            <person name="Sheng Y."/>
            <person name="Shibata Y."/>
            <person name="Shimada H."/>
            <person name="Shimada K."/>
            <person name="Silva D."/>
            <person name="Sinclair B."/>
            <person name="Sperling S."/>
            <person name="Stupka E."/>
            <person name="Sugiura K."/>
            <person name="Sultana R."/>
            <person name="Takenaka Y."/>
            <person name="Taki K."/>
            <person name="Tammoja K."/>
            <person name="Tan S.L."/>
            <person name="Tang S."/>
            <person name="Taylor M.S."/>
            <person name="Tegner J."/>
            <person name="Teichmann S.A."/>
            <person name="Ueda H.R."/>
            <person name="van Nimwegen E."/>
            <person name="Verardo R."/>
            <person name="Wei C.L."/>
            <person name="Yagi K."/>
            <person name="Yamanishi H."/>
            <person name="Zabarovsky E."/>
            <person name="Zhu S."/>
            <person name="Zimmer A."/>
            <person name="Hide W."/>
            <person name="Bult C."/>
            <person name="Grimmond S.M."/>
            <person name="Teasdale R.D."/>
            <person name="Liu E.T."/>
            <person name="Brusic V."/>
            <person name="Quackenbush J."/>
            <person name="Wahlestedt C."/>
            <person name="Mattick J.S."/>
            <person name="Hume D.A."/>
            <person name="Kai C."/>
            <person name="Sasaki D."/>
            <person name="Tomaru Y."/>
            <person name="Fukuda S."/>
            <person name="Kanamori-Katayama M."/>
            <person name="Suzuki M."/>
            <person name="Aoki J."/>
            <person name="Arakawa T."/>
            <person name="Iida J."/>
            <person name="Imamura K."/>
            <person name="Itoh M."/>
            <person name="Kato T."/>
            <person name="Kawaji H."/>
            <person name="Kawagashira N."/>
            <person name="Kawashima T."/>
            <person name="Kojima M."/>
            <person name="Kondo S."/>
            <person name="Konno H."/>
            <person name="Nakano K."/>
            <person name="Ninomiya N."/>
            <person name="Nishio T."/>
            <person name="Okada M."/>
            <person name="Plessy C."/>
            <person name="Shibata K."/>
            <person name="Shiraki T."/>
            <person name="Suzuki S."/>
            <person name="Tagami M."/>
            <person name="Waki K."/>
            <person name="Watahiki A."/>
            <person name="Okamura-Oho Y."/>
            <person name="Suzuki H."/>
            <person name="Kawai J."/>
            <person name="Hayashizaki Y."/>
        </authorList>
    </citation>
    <scope>NUCLEOTIDE SEQUENCE [LARGE SCALE MRNA]</scope>
    <source>
        <strain>C57BL/6J</strain>
        <tissue>Diencephalon</tissue>
        <tissue>Embryonic head</tissue>
    </source>
</reference>
<reference key="4">
    <citation type="journal article" date="2004" name="Genome Res.">
        <title>The status, quality, and expansion of the NIH full-length cDNA project: the Mammalian Gene Collection (MGC).</title>
        <authorList>
            <consortium name="The MGC Project Team"/>
        </authorList>
    </citation>
    <scope>NUCLEOTIDE SEQUENCE [LARGE SCALE MRNA]</scope>
    <source>
        <strain>C57BL/6J</strain>
        <tissue>Embryonic brain</tissue>
    </source>
</reference>
<reference key="5">
    <citation type="journal article" date="2004" name="J. Pharmacol. Exp. Ther.">
        <title>Regulation of choline transporter surface expression and phosphorylation by protein kinase C and protein phosphatase 1/2A.</title>
        <authorList>
            <person name="Gates J. Jr."/>
            <person name="Ferguson S.M."/>
            <person name="Blakely R.D."/>
            <person name="Apparsundaram S."/>
        </authorList>
    </citation>
    <scope>PHOSPHORYLATION BY PKC</scope>
    <source>
        <tissue>Corpus striatum</tissue>
        <tissue>Hippocampus</tissue>
    </source>
</reference>
<reference key="6">
    <citation type="journal article" date="2004" name="Proc. Natl. Acad. Sci. U.S.A.">
        <title>Lethal impairment of cholinergic neurotransmission in hemicholinium-3-sensitive choline transporter knockout mice.</title>
        <authorList>
            <person name="Ferguson S.M."/>
            <person name="Bazalakova M."/>
            <person name="Savchenko V."/>
            <person name="Tapia J.C."/>
            <person name="Wright J."/>
            <person name="Blakely R.D."/>
        </authorList>
    </citation>
    <scope>FUNCTION</scope>
    <scope>TRANSPORTER ACTIVITY</scope>
    <scope>ACTIVITY REGULATION</scope>
    <scope>SUBCELLULAR LOCATION</scope>
    <scope>DISRUPTION PHENOTYPE</scope>
</reference>
<gene>
    <name evidence="9" type="primary">Slc5a7</name>
    <name type="synonym">Cht1</name>
</gene>
<evidence type="ECO:0000250" key="1">
    <source>
        <dbReference type="UniProtKB" id="Q9GZV3"/>
    </source>
</evidence>
<evidence type="ECO:0000250" key="2">
    <source>
        <dbReference type="UniProtKB" id="Q9JMD7"/>
    </source>
</evidence>
<evidence type="ECO:0000255" key="3"/>
<evidence type="ECO:0000269" key="4">
    <source>
    </source>
</evidence>
<evidence type="ECO:0000269" key="5">
    <source>
    </source>
</evidence>
<evidence type="ECO:0000269" key="6">
    <source>
    </source>
</evidence>
<evidence type="ECO:0000303" key="7">
    <source>
    </source>
</evidence>
<evidence type="ECO:0000305" key="8"/>
<evidence type="ECO:0000312" key="9">
    <source>
        <dbReference type="MGI" id="MGI:1927126"/>
    </source>
</evidence>